<dbReference type="EC" id="4.6.1.12" evidence="1"/>
<dbReference type="EMBL" id="CP001037">
    <property type="protein sequence ID" value="ACC84124.1"/>
    <property type="molecule type" value="Genomic_DNA"/>
</dbReference>
<dbReference type="RefSeq" id="WP_012412067.1">
    <property type="nucleotide sequence ID" value="NC_010628.1"/>
</dbReference>
<dbReference type="SMR" id="B2JA49"/>
<dbReference type="STRING" id="63737.Npun_F5826"/>
<dbReference type="EnsemblBacteria" id="ACC84124">
    <property type="protein sequence ID" value="ACC84124"/>
    <property type="gene ID" value="Npun_F5826"/>
</dbReference>
<dbReference type="KEGG" id="npu:Npun_F5826"/>
<dbReference type="eggNOG" id="COG0245">
    <property type="taxonomic scope" value="Bacteria"/>
</dbReference>
<dbReference type="HOGENOM" id="CLU_084630_2_0_3"/>
<dbReference type="OrthoDB" id="9804336at2"/>
<dbReference type="PhylomeDB" id="B2JA49"/>
<dbReference type="UniPathway" id="UPA00056">
    <property type="reaction ID" value="UER00095"/>
</dbReference>
<dbReference type="Proteomes" id="UP000001191">
    <property type="component" value="Chromosome"/>
</dbReference>
<dbReference type="GO" id="GO:0008685">
    <property type="term" value="F:2-C-methyl-D-erythritol 2,4-cyclodiphosphate synthase activity"/>
    <property type="evidence" value="ECO:0007669"/>
    <property type="project" value="UniProtKB-UniRule"/>
</dbReference>
<dbReference type="GO" id="GO:0046872">
    <property type="term" value="F:metal ion binding"/>
    <property type="evidence" value="ECO:0007669"/>
    <property type="project" value="UniProtKB-KW"/>
</dbReference>
<dbReference type="GO" id="GO:0019288">
    <property type="term" value="P:isopentenyl diphosphate biosynthetic process, methylerythritol 4-phosphate pathway"/>
    <property type="evidence" value="ECO:0007669"/>
    <property type="project" value="UniProtKB-UniRule"/>
</dbReference>
<dbReference type="GO" id="GO:0016114">
    <property type="term" value="P:terpenoid biosynthetic process"/>
    <property type="evidence" value="ECO:0007669"/>
    <property type="project" value="InterPro"/>
</dbReference>
<dbReference type="CDD" id="cd00554">
    <property type="entry name" value="MECDP_synthase"/>
    <property type="match status" value="1"/>
</dbReference>
<dbReference type="FunFam" id="3.30.1330.50:FF:000001">
    <property type="entry name" value="2-C-methyl-D-erythritol 2,4-cyclodiphosphate synthase"/>
    <property type="match status" value="1"/>
</dbReference>
<dbReference type="Gene3D" id="3.30.1330.50">
    <property type="entry name" value="2-C-methyl-D-erythritol 2,4-cyclodiphosphate synthase"/>
    <property type="match status" value="1"/>
</dbReference>
<dbReference type="HAMAP" id="MF_00107">
    <property type="entry name" value="IspF"/>
    <property type="match status" value="1"/>
</dbReference>
<dbReference type="InterPro" id="IPR003526">
    <property type="entry name" value="MECDP_synthase"/>
</dbReference>
<dbReference type="InterPro" id="IPR020555">
    <property type="entry name" value="MECDP_synthase_CS"/>
</dbReference>
<dbReference type="InterPro" id="IPR036571">
    <property type="entry name" value="MECDP_synthase_sf"/>
</dbReference>
<dbReference type="NCBIfam" id="TIGR00151">
    <property type="entry name" value="ispF"/>
    <property type="match status" value="1"/>
</dbReference>
<dbReference type="PANTHER" id="PTHR43181">
    <property type="entry name" value="2-C-METHYL-D-ERYTHRITOL 2,4-CYCLODIPHOSPHATE SYNTHASE, CHLOROPLASTIC"/>
    <property type="match status" value="1"/>
</dbReference>
<dbReference type="PANTHER" id="PTHR43181:SF1">
    <property type="entry name" value="2-C-METHYL-D-ERYTHRITOL 2,4-CYCLODIPHOSPHATE SYNTHASE, CHLOROPLASTIC"/>
    <property type="match status" value="1"/>
</dbReference>
<dbReference type="Pfam" id="PF02542">
    <property type="entry name" value="YgbB"/>
    <property type="match status" value="1"/>
</dbReference>
<dbReference type="SUPFAM" id="SSF69765">
    <property type="entry name" value="IpsF-like"/>
    <property type="match status" value="1"/>
</dbReference>
<dbReference type="PROSITE" id="PS01350">
    <property type="entry name" value="ISPF"/>
    <property type="match status" value="1"/>
</dbReference>
<keyword id="KW-0414">Isoprene biosynthesis</keyword>
<keyword id="KW-0456">Lyase</keyword>
<keyword id="KW-0479">Metal-binding</keyword>
<keyword id="KW-1185">Reference proteome</keyword>
<reference key="1">
    <citation type="journal article" date="2013" name="Plant Physiol.">
        <title>A Nostoc punctiforme Sugar Transporter Necessary to Establish a Cyanobacterium-Plant Symbiosis.</title>
        <authorList>
            <person name="Ekman M."/>
            <person name="Picossi S."/>
            <person name="Campbell E.L."/>
            <person name="Meeks J.C."/>
            <person name="Flores E."/>
        </authorList>
    </citation>
    <scope>NUCLEOTIDE SEQUENCE [LARGE SCALE GENOMIC DNA]</scope>
    <source>
        <strain>ATCC 29133 / PCC 73102</strain>
    </source>
</reference>
<comment type="function">
    <text evidence="1">Involved in the biosynthesis of isopentenyl diphosphate (IPP) and dimethylallyl diphosphate (DMAPP), two major building blocks of isoprenoid compounds. Catalyzes the conversion of 4-diphosphocytidyl-2-C-methyl-D-erythritol 2-phosphate (CDP-ME2P) to 2-C-methyl-D-erythritol 2,4-cyclodiphosphate (ME-CPP) with a corresponding release of cytidine 5-monophosphate (CMP).</text>
</comment>
<comment type="catalytic activity">
    <reaction evidence="1">
        <text>4-CDP-2-C-methyl-D-erythritol 2-phosphate = 2-C-methyl-D-erythritol 2,4-cyclic diphosphate + CMP</text>
        <dbReference type="Rhea" id="RHEA:23864"/>
        <dbReference type="ChEBI" id="CHEBI:57919"/>
        <dbReference type="ChEBI" id="CHEBI:58483"/>
        <dbReference type="ChEBI" id="CHEBI:60377"/>
        <dbReference type="EC" id="4.6.1.12"/>
    </reaction>
</comment>
<comment type="cofactor">
    <cofactor evidence="1">
        <name>a divalent metal cation</name>
        <dbReference type="ChEBI" id="CHEBI:60240"/>
    </cofactor>
    <text evidence="1">Binds 1 divalent metal cation per subunit.</text>
</comment>
<comment type="pathway">
    <text evidence="1">Isoprenoid biosynthesis; isopentenyl diphosphate biosynthesis via DXP pathway; isopentenyl diphosphate from 1-deoxy-D-xylulose 5-phosphate: step 4/6.</text>
</comment>
<comment type="subunit">
    <text evidence="1">Homotrimer.</text>
</comment>
<comment type="similarity">
    <text evidence="1">Belongs to the IspF family.</text>
</comment>
<sequence length="160" mass="17459">MTKIRIGNGYDIHQLVSDRVLILGGIQIPHELGLLGHSDADVLTHAIMDAMLGALSLGDIGHYFPPSDPKWAGADSLVLLNQVHQLIRDRGWQVGNIDSVVVAERPKLKPHIHNMRDKLAAILELESNQIGIKATTNEKLGPVGREEGICAYAVVLLLKE</sequence>
<feature type="chain" id="PRO_1000094276" description="2-C-methyl-D-erythritol 2,4-cyclodiphosphate synthase">
    <location>
        <begin position="1"/>
        <end position="160"/>
    </location>
</feature>
<feature type="binding site" evidence="1">
    <location>
        <begin position="11"/>
        <end position="13"/>
    </location>
    <ligand>
        <name>4-CDP-2-C-methyl-D-erythritol 2-phosphate</name>
        <dbReference type="ChEBI" id="CHEBI:57919"/>
    </ligand>
</feature>
<feature type="binding site" evidence="1">
    <location>
        <position position="11"/>
    </location>
    <ligand>
        <name>a divalent metal cation</name>
        <dbReference type="ChEBI" id="CHEBI:60240"/>
    </ligand>
</feature>
<feature type="binding site" evidence="1">
    <location>
        <position position="13"/>
    </location>
    <ligand>
        <name>a divalent metal cation</name>
        <dbReference type="ChEBI" id="CHEBI:60240"/>
    </ligand>
</feature>
<feature type="binding site" evidence="1">
    <location>
        <begin position="37"/>
        <end position="38"/>
    </location>
    <ligand>
        <name>4-CDP-2-C-methyl-D-erythritol 2-phosphate</name>
        <dbReference type="ChEBI" id="CHEBI:57919"/>
    </ligand>
</feature>
<feature type="binding site" evidence="1">
    <location>
        <position position="45"/>
    </location>
    <ligand>
        <name>a divalent metal cation</name>
        <dbReference type="ChEBI" id="CHEBI:60240"/>
    </ligand>
</feature>
<feature type="binding site" evidence="1">
    <location>
        <begin position="59"/>
        <end position="61"/>
    </location>
    <ligand>
        <name>4-CDP-2-C-methyl-D-erythritol 2-phosphate</name>
        <dbReference type="ChEBI" id="CHEBI:57919"/>
    </ligand>
</feature>
<feature type="binding site" evidence="1">
    <location>
        <begin position="135"/>
        <end position="138"/>
    </location>
    <ligand>
        <name>4-CDP-2-C-methyl-D-erythritol 2-phosphate</name>
        <dbReference type="ChEBI" id="CHEBI:57919"/>
    </ligand>
</feature>
<feature type="binding site" evidence="1">
    <location>
        <position position="145"/>
    </location>
    <ligand>
        <name>4-CDP-2-C-methyl-D-erythritol 2-phosphate</name>
        <dbReference type="ChEBI" id="CHEBI:57919"/>
    </ligand>
</feature>
<feature type="site" description="Transition state stabilizer" evidence="1">
    <location>
        <position position="37"/>
    </location>
</feature>
<feature type="site" description="Transition state stabilizer" evidence="1">
    <location>
        <position position="136"/>
    </location>
</feature>
<organism>
    <name type="scientific">Nostoc punctiforme (strain ATCC 29133 / PCC 73102)</name>
    <dbReference type="NCBI Taxonomy" id="63737"/>
    <lineage>
        <taxon>Bacteria</taxon>
        <taxon>Bacillati</taxon>
        <taxon>Cyanobacteriota</taxon>
        <taxon>Cyanophyceae</taxon>
        <taxon>Nostocales</taxon>
        <taxon>Nostocaceae</taxon>
        <taxon>Nostoc</taxon>
    </lineage>
</organism>
<protein>
    <recommendedName>
        <fullName evidence="1">2-C-methyl-D-erythritol 2,4-cyclodiphosphate synthase</fullName>
        <shortName evidence="1">MECDP-synthase</shortName>
        <shortName evidence="1">MECPP-synthase</shortName>
        <shortName evidence="1">MECPS</shortName>
        <ecNumber evidence="1">4.6.1.12</ecNumber>
    </recommendedName>
</protein>
<evidence type="ECO:0000255" key="1">
    <source>
        <dbReference type="HAMAP-Rule" id="MF_00107"/>
    </source>
</evidence>
<gene>
    <name evidence="1" type="primary">ispF</name>
    <name type="ordered locus">Npun_F5826</name>
</gene>
<proteinExistence type="inferred from homology"/>
<name>ISPF_NOSP7</name>
<accession>B2JA49</accession>